<proteinExistence type="inferred from homology"/>
<reference key="1">
    <citation type="submission" date="2007-10" db="EMBL/GenBank/DDBJ databases">
        <title>Complete sequence of Shewanella pealeana ATCC 700345.</title>
        <authorList>
            <consortium name="US DOE Joint Genome Institute"/>
            <person name="Copeland A."/>
            <person name="Lucas S."/>
            <person name="Lapidus A."/>
            <person name="Barry K."/>
            <person name="Glavina del Rio T."/>
            <person name="Dalin E."/>
            <person name="Tice H."/>
            <person name="Pitluck S."/>
            <person name="Chertkov O."/>
            <person name="Brettin T."/>
            <person name="Bruce D."/>
            <person name="Detter J.C."/>
            <person name="Han C."/>
            <person name="Schmutz J."/>
            <person name="Larimer F."/>
            <person name="Land M."/>
            <person name="Hauser L."/>
            <person name="Kyrpides N."/>
            <person name="Kim E."/>
            <person name="Zhao J.-S.Z."/>
            <person name="Manno D."/>
            <person name="Hawari J."/>
            <person name="Richardson P."/>
        </authorList>
    </citation>
    <scope>NUCLEOTIDE SEQUENCE [LARGE SCALE GENOMIC DNA]</scope>
    <source>
        <strain>ATCC 700345 / ANG-SQ1</strain>
    </source>
</reference>
<comment type="function">
    <text evidence="1">Catalyzes the NADPH-dependent reduction of glutamyl-tRNA(Glu) to glutamate 1-semialdehyde (GSA).</text>
</comment>
<comment type="catalytic activity">
    <reaction evidence="1">
        <text>(S)-4-amino-5-oxopentanoate + tRNA(Glu) + NADP(+) = L-glutamyl-tRNA(Glu) + NADPH + H(+)</text>
        <dbReference type="Rhea" id="RHEA:12344"/>
        <dbReference type="Rhea" id="RHEA-COMP:9663"/>
        <dbReference type="Rhea" id="RHEA-COMP:9680"/>
        <dbReference type="ChEBI" id="CHEBI:15378"/>
        <dbReference type="ChEBI" id="CHEBI:57501"/>
        <dbReference type="ChEBI" id="CHEBI:57783"/>
        <dbReference type="ChEBI" id="CHEBI:58349"/>
        <dbReference type="ChEBI" id="CHEBI:78442"/>
        <dbReference type="ChEBI" id="CHEBI:78520"/>
        <dbReference type="EC" id="1.2.1.70"/>
    </reaction>
</comment>
<comment type="pathway">
    <text evidence="1">Porphyrin-containing compound metabolism; protoporphyrin-IX biosynthesis; 5-aminolevulinate from L-glutamyl-tRNA(Glu): step 1/2.</text>
</comment>
<comment type="subunit">
    <text evidence="1">Homodimer.</text>
</comment>
<comment type="domain">
    <text evidence="1">Possesses an unusual extended V-shaped dimeric structure with each monomer consisting of three distinct domains arranged along a curved 'spinal' alpha-helix. The N-terminal catalytic domain specifically recognizes the glutamate moiety of the substrate. The second domain is the NADPH-binding domain, and the third C-terminal domain is responsible for dimerization.</text>
</comment>
<comment type="miscellaneous">
    <text evidence="1">During catalysis, the active site Cys acts as a nucleophile attacking the alpha-carbonyl group of tRNA-bound glutamate with the formation of a thioester intermediate between enzyme and glutamate, and the concomitant release of tRNA(Glu). The thioester intermediate is finally reduced by direct hydride transfer from NADPH, to form the product GSA.</text>
</comment>
<comment type="similarity">
    <text evidence="1">Belongs to the glutamyl-tRNA reductase family.</text>
</comment>
<feature type="chain" id="PRO_1000075427" description="Glutamyl-tRNA reductase">
    <location>
        <begin position="1"/>
        <end position="416"/>
    </location>
</feature>
<feature type="active site" description="Nucleophile" evidence="1">
    <location>
        <position position="50"/>
    </location>
</feature>
<feature type="binding site" evidence="1">
    <location>
        <begin position="49"/>
        <end position="52"/>
    </location>
    <ligand>
        <name>substrate</name>
    </ligand>
</feature>
<feature type="binding site" evidence="1">
    <location>
        <position position="105"/>
    </location>
    <ligand>
        <name>substrate</name>
    </ligand>
</feature>
<feature type="binding site" evidence="1">
    <location>
        <begin position="110"/>
        <end position="112"/>
    </location>
    <ligand>
        <name>substrate</name>
    </ligand>
</feature>
<feature type="binding site" evidence="1">
    <location>
        <position position="116"/>
    </location>
    <ligand>
        <name>substrate</name>
    </ligand>
</feature>
<feature type="binding site" evidence="1">
    <location>
        <begin position="185"/>
        <end position="190"/>
    </location>
    <ligand>
        <name>NADP(+)</name>
        <dbReference type="ChEBI" id="CHEBI:58349"/>
    </ligand>
</feature>
<feature type="site" description="Important for activity" evidence="1">
    <location>
        <position position="95"/>
    </location>
</feature>
<keyword id="KW-0521">NADP</keyword>
<keyword id="KW-0560">Oxidoreductase</keyword>
<keyword id="KW-0627">Porphyrin biosynthesis</keyword>
<keyword id="KW-1185">Reference proteome</keyword>
<dbReference type="EC" id="1.2.1.70" evidence="1"/>
<dbReference type="EMBL" id="CP000851">
    <property type="protein sequence ID" value="ABV88443.1"/>
    <property type="molecule type" value="Genomic_DNA"/>
</dbReference>
<dbReference type="RefSeq" id="WP_012156345.1">
    <property type="nucleotide sequence ID" value="NC_009901.1"/>
</dbReference>
<dbReference type="SMR" id="A8H7A6"/>
<dbReference type="STRING" id="398579.Spea_3127"/>
<dbReference type="KEGG" id="spl:Spea_3127"/>
<dbReference type="eggNOG" id="COG0373">
    <property type="taxonomic scope" value="Bacteria"/>
</dbReference>
<dbReference type="HOGENOM" id="CLU_035113_2_2_6"/>
<dbReference type="OrthoDB" id="110209at2"/>
<dbReference type="UniPathway" id="UPA00251">
    <property type="reaction ID" value="UER00316"/>
</dbReference>
<dbReference type="Proteomes" id="UP000002608">
    <property type="component" value="Chromosome"/>
</dbReference>
<dbReference type="GO" id="GO:0008883">
    <property type="term" value="F:glutamyl-tRNA reductase activity"/>
    <property type="evidence" value="ECO:0007669"/>
    <property type="project" value="UniProtKB-UniRule"/>
</dbReference>
<dbReference type="GO" id="GO:0050661">
    <property type="term" value="F:NADP binding"/>
    <property type="evidence" value="ECO:0007669"/>
    <property type="project" value="InterPro"/>
</dbReference>
<dbReference type="GO" id="GO:0019353">
    <property type="term" value="P:protoporphyrinogen IX biosynthetic process from glutamate"/>
    <property type="evidence" value="ECO:0007669"/>
    <property type="project" value="TreeGrafter"/>
</dbReference>
<dbReference type="CDD" id="cd05213">
    <property type="entry name" value="NAD_bind_Glutamyl_tRNA_reduct"/>
    <property type="match status" value="1"/>
</dbReference>
<dbReference type="FunFam" id="3.30.460.30:FF:000001">
    <property type="entry name" value="Glutamyl-tRNA reductase"/>
    <property type="match status" value="1"/>
</dbReference>
<dbReference type="FunFam" id="3.40.50.720:FF:000031">
    <property type="entry name" value="Glutamyl-tRNA reductase"/>
    <property type="match status" value="1"/>
</dbReference>
<dbReference type="Gene3D" id="3.30.460.30">
    <property type="entry name" value="Glutamyl-tRNA reductase, N-terminal domain"/>
    <property type="match status" value="1"/>
</dbReference>
<dbReference type="Gene3D" id="3.40.50.720">
    <property type="entry name" value="NAD(P)-binding Rossmann-like Domain"/>
    <property type="match status" value="1"/>
</dbReference>
<dbReference type="HAMAP" id="MF_00087">
    <property type="entry name" value="Glu_tRNA_reductase"/>
    <property type="match status" value="1"/>
</dbReference>
<dbReference type="InterPro" id="IPR000343">
    <property type="entry name" value="4pyrrol_synth_GluRdtase"/>
</dbReference>
<dbReference type="InterPro" id="IPR015896">
    <property type="entry name" value="4pyrrol_synth_GluRdtase_dimer"/>
</dbReference>
<dbReference type="InterPro" id="IPR015895">
    <property type="entry name" value="4pyrrol_synth_GluRdtase_N"/>
</dbReference>
<dbReference type="InterPro" id="IPR018214">
    <property type="entry name" value="GluRdtase_CS"/>
</dbReference>
<dbReference type="InterPro" id="IPR036453">
    <property type="entry name" value="GluRdtase_dimer_dom_sf"/>
</dbReference>
<dbReference type="InterPro" id="IPR036343">
    <property type="entry name" value="GluRdtase_N_sf"/>
</dbReference>
<dbReference type="InterPro" id="IPR036291">
    <property type="entry name" value="NAD(P)-bd_dom_sf"/>
</dbReference>
<dbReference type="InterPro" id="IPR006151">
    <property type="entry name" value="Shikm_DH/Glu-tRNA_Rdtase"/>
</dbReference>
<dbReference type="NCBIfam" id="TIGR01035">
    <property type="entry name" value="hemA"/>
    <property type="match status" value="1"/>
</dbReference>
<dbReference type="PANTHER" id="PTHR43013">
    <property type="entry name" value="GLUTAMYL-TRNA REDUCTASE"/>
    <property type="match status" value="1"/>
</dbReference>
<dbReference type="PANTHER" id="PTHR43013:SF1">
    <property type="entry name" value="GLUTAMYL-TRNA REDUCTASE"/>
    <property type="match status" value="1"/>
</dbReference>
<dbReference type="Pfam" id="PF00745">
    <property type="entry name" value="GlutR_dimer"/>
    <property type="match status" value="1"/>
</dbReference>
<dbReference type="Pfam" id="PF05201">
    <property type="entry name" value="GlutR_N"/>
    <property type="match status" value="1"/>
</dbReference>
<dbReference type="Pfam" id="PF01488">
    <property type="entry name" value="Shikimate_DH"/>
    <property type="match status" value="1"/>
</dbReference>
<dbReference type="PIRSF" id="PIRSF000445">
    <property type="entry name" value="4pyrrol_synth_GluRdtase"/>
    <property type="match status" value="1"/>
</dbReference>
<dbReference type="SUPFAM" id="SSF69742">
    <property type="entry name" value="Glutamyl tRNA-reductase catalytic, N-terminal domain"/>
    <property type="match status" value="1"/>
</dbReference>
<dbReference type="SUPFAM" id="SSF69075">
    <property type="entry name" value="Glutamyl tRNA-reductase dimerization domain"/>
    <property type="match status" value="1"/>
</dbReference>
<dbReference type="SUPFAM" id="SSF51735">
    <property type="entry name" value="NAD(P)-binding Rossmann-fold domains"/>
    <property type="match status" value="1"/>
</dbReference>
<dbReference type="PROSITE" id="PS00747">
    <property type="entry name" value="GLUTR"/>
    <property type="match status" value="1"/>
</dbReference>
<organism>
    <name type="scientific">Shewanella pealeana (strain ATCC 700345 / ANG-SQ1)</name>
    <dbReference type="NCBI Taxonomy" id="398579"/>
    <lineage>
        <taxon>Bacteria</taxon>
        <taxon>Pseudomonadati</taxon>
        <taxon>Pseudomonadota</taxon>
        <taxon>Gammaproteobacteria</taxon>
        <taxon>Alteromonadales</taxon>
        <taxon>Shewanellaceae</taxon>
        <taxon>Shewanella</taxon>
    </lineage>
</organism>
<accession>A8H7A6</accession>
<gene>
    <name evidence="1" type="primary">hemA</name>
    <name type="ordered locus">Spea_3127</name>
</gene>
<sequence>MSLVAIGINHKTATVDLREKVAFGPDKIHDAMKSLAASTQSGEAVIISTCNRTELYCNNCEAADVVAWLEDYHQLSHEDVEPCLYQYKGQEAVKHLMRVSAGLDSLILGEPQILGQVKQSFVKAKEAGTVAATMDRMFQNTFSVAKKIRTETEIGAAAVSVAFAAVSMAKHIFSSISTTQVLLVGAGETIELVARHLKDNGVTTMVVANRTISRAEAMCEEFGATAITLEQIPDFLPKADIVISSTASPLPILGKGMVEKALKQRRHQPMLLVDIAVPRDIEAEVADLDDAFLYTVDDLQSIIEQNMASRREAAEQAELIAEDQAYQFMEWIRSLESVDSIREYRTKSMAIKDELVERAVNKLAQGGNSEQVLLELANKLTNKLIHAPTQALTAASRQGDLNSLGQLRALLGLDKD</sequence>
<name>HEM1_SHEPA</name>
<protein>
    <recommendedName>
        <fullName evidence="1">Glutamyl-tRNA reductase</fullName>
        <shortName evidence="1">GluTR</shortName>
        <ecNumber evidence="1">1.2.1.70</ecNumber>
    </recommendedName>
</protein>
<evidence type="ECO:0000255" key="1">
    <source>
        <dbReference type="HAMAP-Rule" id="MF_00087"/>
    </source>
</evidence>